<evidence type="ECO:0000255" key="1">
    <source>
        <dbReference type="HAMAP-Rule" id="MF_00780"/>
    </source>
</evidence>
<proteinExistence type="inferred from homology"/>
<gene>
    <name type="ordered locus">Shew185_3055</name>
</gene>
<feature type="signal peptide" evidence="1">
    <location>
        <begin position="1"/>
        <end position="22"/>
    </location>
</feature>
<feature type="chain" id="PRO_5000261022" description="UPF0312 protein Shew185_3055">
    <location>
        <begin position="23"/>
        <end position="191"/>
    </location>
</feature>
<accession>A6WQU7</accession>
<dbReference type="EMBL" id="CP000753">
    <property type="protein sequence ID" value="ABS09186.1"/>
    <property type="molecule type" value="Genomic_DNA"/>
</dbReference>
<dbReference type="RefSeq" id="WP_006082533.1">
    <property type="nucleotide sequence ID" value="NC_009665.1"/>
</dbReference>
<dbReference type="SMR" id="A6WQU7"/>
<dbReference type="KEGG" id="sbm:Shew185_3055"/>
<dbReference type="HOGENOM" id="CLU_071003_1_2_6"/>
<dbReference type="GO" id="GO:0042597">
    <property type="term" value="C:periplasmic space"/>
    <property type="evidence" value="ECO:0007669"/>
    <property type="project" value="UniProtKB-SubCell"/>
</dbReference>
<dbReference type="Gene3D" id="2.40.128.110">
    <property type="entry name" value="Lipid/polyisoprenoid-binding, YceI-like"/>
    <property type="match status" value="1"/>
</dbReference>
<dbReference type="HAMAP" id="MF_00780">
    <property type="entry name" value="UPF0312"/>
    <property type="match status" value="1"/>
</dbReference>
<dbReference type="InterPro" id="IPR007372">
    <property type="entry name" value="Lipid/polyisoprenoid-bd_YceI"/>
</dbReference>
<dbReference type="InterPro" id="IPR036761">
    <property type="entry name" value="TTHA0802/YceI-like_sf"/>
</dbReference>
<dbReference type="InterPro" id="IPR023480">
    <property type="entry name" value="UPF0312/YceI"/>
</dbReference>
<dbReference type="NCBIfam" id="NF002994">
    <property type="entry name" value="PRK03757.1"/>
    <property type="match status" value="1"/>
</dbReference>
<dbReference type="PANTHER" id="PTHR34406">
    <property type="entry name" value="PROTEIN YCEI"/>
    <property type="match status" value="1"/>
</dbReference>
<dbReference type="PANTHER" id="PTHR34406:SF1">
    <property type="entry name" value="PROTEIN YCEI"/>
    <property type="match status" value="1"/>
</dbReference>
<dbReference type="Pfam" id="PF04264">
    <property type="entry name" value="YceI"/>
    <property type="match status" value="1"/>
</dbReference>
<dbReference type="SMART" id="SM00867">
    <property type="entry name" value="YceI"/>
    <property type="match status" value="1"/>
</dbReference>
<dbReference type="SUPFAM" id="SSF101874">
    <property type="entry name" value="YceI-like"/>
    <property type="match status" value="1"/>
</dbReference>
<organism>
    <name type="scientific">Shewanella baltica (strain OS185)</name>
    <dbReference type="NCBI Taxonomy" id="402882"/>
    <lineage>
        <taxon>Bacteria</taxon>
        <taxon>Pseudomonadati</taxon>
        <taxon>Pseudomonadota</taxon>
        <taxon>Gammaproteobacteria</taxon>
        <taxon>Alteromonadales</taxon>
        <taxon>Shewanellaceae</taxon>
        <taxon>Shewanella</taxon>
    </lineage>
</organism>
<protein>
    <recommendedName>
        <fullName evidence="1">UPF0312 protein Shew185_3055</fullName>
    </recommendedName>
</protein>
<reference key="1">
    <citation type="submission" date="2007-07" db="EMBL/GenBank/DDBJ databases">
        <title>Complete sequence of chromosome of Shewanella baltica OS185.</title>
        <authorList>
            <consortium name="US DOE Joint Genome Institute"/>
            <person name="Copeland A."/>
            <person name="Lucas S."/>
            <person name="Lapidus A."/>
            <person name="Barry K."/>
            <person name="Glavina del Rio T."/>
            <person name="Dalin E."/>
            <person name="Tice H."/>
            <person name="Pitluck S."/>
            <person name="Sims D."/>
            <person name="Brettin T."/>
            <person name="Bruce D."/>
            <person name="Detter J.C."/>
            <person name="Han C."/>
            <person name="Schmutz J."/>
            <person name="Larimer F."/>
            <person name="Land M."/>
            <person name="Hauser L."/>
            <person name="Kyrpides N."/>
            <person name="Mikhailova N."/>
            <person name="Brettar I."/>
            <person name="Rodrigues J."/>
            <person name="Konstantinidis K."/>
            <person name="Tiedje J."/>
            <person name="Richardson P."/>
        </authorList>
    </citation>
    <scope>NUCLEOTIDE SEQUENCE [LARGE SCALE GENOMIC DNA]</scope>
    <source>
        <strain>OS185</strain>
    </source>
</reference>
<keyword id="KW-0574">Periplasm</keyword>
<keyword id="KW-0732">Signal</keyword>
<comment type="subcellular location">
    <subcellularLocation>
        <location evidence="1">Periplasm</location>
    </subcellularLocation>
</comment>
<comment type="similarity">
    <text evidence="1">Belongs to the UPF0312 family. Type 1 subfamily.</text>
</comment>
<sequence length="191" mass="20272">MKKQLLSALIGASLLAPMAASAADYVIDREGAHASITFKVSHLGYSYVVGRFNDFSGDFSYDAAKPTAAKVNVTVNTLSVDSNHAERDKHIRSADFLNTSKFAQATFTSTTVEDKGNGDLVINGNLTLNGVTKPLAINAHAVGEGQDPWGGYRAGFTGTTTFAMKDFGIKMDLGPASSHVELDLVVEGVRK</sequence>
<name>Y3055_SHEB8</name>